<dbReference type="EMBL" id="AF542093">
    <property type="protein sequence ID" value="AAO33820.1"/>
    <property type="molecule type" value="Genomic_DNA"/>
</dbReference>
<dbReference type="EMBL" id="CAAE01014646">
    <property type="protein sequence ID" value="CAG01491.1"/>
    <property type="molecule type" value="Genomic_DNA"/>
</dbReference>
<dbReference type="SMR" id="Q804S2"/>
<dbReference type="FunCoup" id="Q804S2">
    <property type="interactions" value="363"/>
</dbReference>
<dbReference type="STRING" id="99883.ENSTNIP00000013645"/>
<dbReference type="GlyCosmos" id="Q804S2">
    <property type="glycosylation" value="5 sites, No reported glycans"/>
</dbReference>
<dbReference type="Ensembl" id="ENSTNIT00000013839.1">
    <property type="protein sequence ID" value="ENSTNIP00000013645.1"/>
    <property type="gene ID" value="ENSTNIG00000010727.1"/>
</dbReference>
<dbReference type="KEGG" id="tng:GSTEN00020275G001"/>
<dbReference type="GeneTree" id="ENSGT00940000155666"/>
<dbReference type="HOGENOM" id="CLU_020515_4_2_1"/>
<dbReference type="InParanoid" id="Q804S2"/>
<dbReference type="OMA" id="HMHSANG"/>
<dbReference type="OrthoDB" id="5987191at2759"/>
<dbReference type="TreeFam" id="TF351789"/>
<dbReference type="Proteomes" id="UP000007303">
    <property type="component" value="Unassembled WGS sequence"/>
</dbReference>
<dbReference type="GO" id="GO:0005615">
    <property type="term" value="C:extracellular space"/>
    <property type="evidence" value="ECO:0007669"/>
    <property type="project" value="UniProtKB-KW"/>
</dbReference>
<dbReference type="GO" id="GO:0005125">
    <property type="term" value="F:cytokine activity"/>
    <property type="evidence" value="ECO:0007669"/>
    <property type="project" value="UniProtKB-KW"/>
</dbReference>
<dbReference type="GO" id="GO:0008083">
    <property type="term" value="F:growth factor activity"/>
    <property type="evidence" value="ECO:0007669"/>
    <property type="project" value="UniProtKB-KW"/>
</dbReference>
<dbReference type="GO" id="GO:0042802">
    <property type="term" value="F:identical protein binding"/>
    <property type="evidence" value="ECO:0007669"/>
    <property type="project" value="Ensembl"/>
</dbReference>
<dbReference type="GO" id="GO:0046982">
    <property type="term" value="F:protein heterodimerization activity"/>
    <property type="evidence" value="ECO:0007669"/>
    <property type="project" value="Ensembl"/>
</dbReference>
<dbReference type="GO" id="GO:0030509">
    <property type="term" value="P:BMP signaling pathway"/>
    <property type="evidence" value="ECO:0007669"/>
    <property type="project" value="Ensembl"/>
</dbReference>
<dbReference type="GO" id="GO:0051216">
    <property type="term" value="P:cartilage development"/>
    <property type="evidence" value="ECO:0007669"/>
    <property type="project" value="UniProtKB-KW"/>
</dbReference>
<dbReference type="GO" id="GO:0045168">
    <property type="term" value="P:cell-cell signaling involved in cell fate commitment"/>
    <property type="evidence" value="ECO:0007669"/>
    <property type="project" value="Ensembl"/>
</dbReference>
<dbReference type="GO" id="GO:0007368">
    <property type="term" value="P:determination of left/right symmetry"/>
    <property type="evidence" value="ECO:0007669"/>
    <property type="project" value="Ensembl"/>
</dbReference>
<dbReference type="GO" id="GO:0048264">
    <property type="term" value="P:determination of ventral identity"/>
    <property type="evidence" value="ECO:0007669"/>
    <property type="project" value="Ensembl"/>
</dbReference>
<dbReference type="GO" id="GO:0060030">
    <property type="term" value="P:dorsal convergence"/>
    <property type="evidence" value="ECO:0007669"/>
    <property type="project" value="Ensembl"/>
</dbReference>
<dbReference type="GO" id="GO:0009950">
    <property type="term" value="P:dorsal/ventral axis specification"/>
    <property type="evidence" value="ECO:0007669"/>
    <property type="project" value="Ensembl"/>
</dbReference>
<dbReference type="GO" id="GO:0048703">
    <property type="term" value="P:embryonic viscerocranium morphogenesis"/>
    <property type="evidence" value="ECO:0007669"/>
    <property type="project" value="Ensembl"/>
</dbReference>
<dbReference type="GO" id="GO:0048484">
    <property type="term" value="P:enteric nervous system development"/>
    <property type="evidence" value="ECO:0007669"/>
    <property type="project" value="Ensembl"/>
</dbReference>
<dbReference type="GO" id="GO:0090008">
    <property type="term" value="P:hypoblast development"/>
    <property type="evidence" value="ECO:0007669"/>
    <property type="project" value="Ensembl"/>
</dbReference>
<dbReference type="GO" id="GO:0001889">
    <property type="term" value="P:liver development"/>
    <property type="evidence" value="ECO:0007669"/>
    <property type="project" value="Ensembl"/>
</dbReference>
<dbReference type="GO" id="GO:0021703">
    <property type="term" value="P:locus ceruleus development"/>
    <property type="evidence" value="ECO:0007669"/>
    <property type="project" value="Ensembl"/>
</dbReference>
<dbReference type="GO" id="GO:0001710">
    <property type="term" value="P:mesodermal cell fate commitment"/>
    <property type="evidence" value="ECO:0007669"/>
    <property type="project" value="Ensembl"/>
</dbReference>
<dbReference type="GO" id="GO:0042664">
    <property type="term" value="P:negative regulation of endodermal cell fate specification"/>
    <property type="evidence" value="ECO:0007669"/>
    <property type="project" value="Ensembl"/>
</dbReference>
<dbReference type="GO" id="GO:1901166">
    <property type="term" value="P:neural crest cell migration involved in autonomic nervous system development"/>
    <property type="evidence" value="ECO:0007669"/>
    <property type="project" value="Ensembl"/>
</dbReference>
<dbReference type="GO" id="GO:0022008">
    <property type="term" value="P:neurogenesis"/>
    <property type="evidence" value="ECO:0007669"/>
    <property type="project" value="Ensembl"/>
</dbReference>
<dbReference type="GO" id="GO:0030903">
    <property type="term" value="P:notochord development"/>
    <property type="evidence" value="ECO:0007669"/>
    <property type="project" value="Ensembl"/>
</dbReference>
<dbReference type="GO" id="GO:0001503">
    <property type="term" value="P:ossification"/>
    <property type="evidence" value="ECO:0007669"/>
    <property type="project" value="UniProtKB-KW"/>
</dbReference>
<dbReference type="GO" id="GO:0061131">
    <property type="term" value="P:pancreas field specification"/>
    <property type="evidence" value="ECO:0007669"/>
    <property type="project" value="Ensembl"/>
</dbReference>
<dbReference type="GO" id="GO:0030513">
    <property type="term" value="P:positive regulation of BMP signaling pathway"/>
    <property type="evidence" value="ECO:0007669"/>
    <property type="project" value="Ensembl"/>
</dbReference>
<dbReference type="GO" id="GO:0065003">
    <property type="term" value="P:protein-containing complex assembly"/>
    <property type="evidence" value="ECO:0007669"/>
    <property type="project" value="Ensembl"/>
</dbReference>
<dbReference type="GO" id="GO:0060876">
    <property type="term" value="P:semicircular canal formation"/>
    <property type="evidence" value="ECO:0007669"/>
    <property type="project" value="Ensembl"/>
</dbReference>
<dbReference type="GO" id="GO:0055015">
    <property type="term" value="P:ventricular cardiac muscle cell development"/>
    <property type="evidence" value="ECO:0007669"/>
    <property type="project" value="Ensembl"/>
</dbReference>
<dbReference type="CDD" id="cd13760">
    <property type="entry name" value="TGF_beta_BMP2_like"/>
    <property type="match status" value="1"/>
</dbReference>
<dbReference type="FunFam" id="2.10.90.10:FF:000103">
    <property type="entry name" value="Bone morphogenetic protein 16"/>
    <property type="match status" value="1"/>
</dbReference>
<dbReference type="FunFam" id="2.60.120.970:FF:000009">
    <property type="entry name" value="bone morphogenetic protein 2"/>
    <property type="match status" value="1"/>
</dbReference>
<dbReference type="Gene3D" id="2.60.120.970">
    <property type="match status" value="1"/>
</dbReference>
<dbReference type="Gene3D" id="2.10.90.10">
    <property type="entry name" value="Cystine-knot cytokines"/>
    <property type="match status" value="1"/>
</dbReference>
<dbReference type="InterPro" id="IPR029034">
    <property type="entry name" value="Cystine-knot_cytokine"/>
</dbReference>
<dbReference type="InterPro" id="IPR001839">
    <property type="entry name" value="TGF-b_C"/>
</dbReference>
<dbReference type="InterPro" id="IPR001111">
    <property type="entry name" value="TGF-b_propeptide"/>
</dbReference>
<dbReference type="InterPro" id="IPR015615">
    <property type="entry name" value="TGF-beta-rel"/>
</dbReference>
<dbReference type="InterPro" id="IPR017948">
    <property type="entry name" value="TGFb_CS"/>
</dbReference>
<dbReference type="PANTHER" id="PTHR11848:SF143">
    <property type="entry name" value="BONE MORPHOGENETIC PROTEIN 2"/>
    <property type="match status" value="1"/>
</dbReference>
<dbReference type="PANTHER" id="PTHR11848">
    <property type="entry name" value="TGF-BETA FAMILY"/>
    <property type="match status" value="1"/>
</dbReference>
<dbReference type="Pfam" id="PF00019">
    <property type="entry name" value="TGF_beta"/>
    <property type="match status" value="1"/>
</dbReference>
<dbReference type="Pfam" id="PF00688">
    <property type="entry name" value="TGFb_propeptide"/>
    <property type="match status" value="1"/>
</dbReference>
<dbReference type="PRINTS" id="PR00669">
    <property type="entry name" value="INHIBINA"/>
</dbReference>
<dbReference type="SMART" id="SM00204">
    <property type="entry name" value="TGFB"/>
    <property type="match status" value="1"/>
</dbReference>
<dbReference type="SUPFAM" id="SSF57501">
    <property type="entry name" value="Cystine-knot cytokines"/>
    <property type="match status" value="1"/>
</dbReference>
<dbReference type="PROSITE" id="PS00250">
    <property type="entry name" value="TGF_BETA_1"/>
    <property type="match status" value="1"/>
</dbReference>
<dbReference type="PROSITE" id="PS51362">
    <property type="entry name" value="TGF_BETA_2"/>
    <property type="match status" value="1"/>
</dbReference>
<protein>
    <recommendedName>
        <fullName>Bone morphogenetic protein 2</fullName>
        <shortName>BMP-2</shortName>
    </recommendedName>
</protein>
<accession>Q804S2</accession>
<accession>Q4SCZ1</accession>
<comment type="function">
    <text evidence="1">Induces cartilage and bone formation.</text>
</comment>
<comment type="subunit">
    <text evidence="2">Homodimer; disulfide-linked.</text>
</comment>
<comment type="subcellular location">
    <subcellularLocation>
        <location evidence="1">Secreted</location>
    </subcellularLocation>
</comment>
<comment type="similarity">
    <text evidence="4">Belongs to the TGF-beta family.</text>
</comment>
<organism>
    <name type="scientific">Tetraodon nigroviridis</name>
    <name type="common">Spotted green pufferfish</name>
    <name type="synonym">Chelonodon nigroviridis</name>
    <dbReference type="NCBI Taxonomy" id="99883"/>
    <lineage>
        <taxon>Eukaryota</taxon>
        <taxon>Metazoa</taxon>
        <taxon>Chordata</taxon>
        <taxon>Craniata</taxon>
        <taxon>Vertebrata</taxon>
        <taxon>Euteleostomi</taxon>
        <taxon>Actinopterygii</taxon>
        <taxon>Neopterygii</taxon>
        <taxon>Teleostei</taxon>
        <taxon>Neoteleostei</taxon>
        <taxon>Acanthomorphata</taxon>
        <taxon>Eupercaria</taxon>
        <taxon>Tetraodontiformes</taxon>
        <taxon>Tetradontoidea</taxon>
        <taxon>Tetraodontidae</taxon>
        <taxon>Tetraodon</taxon>
    </lineage>
</organism>
<gene>
    <name type="primary">bmp2</name>
    <name type="ORF">GSTENG00020275001</name>
</gene>
<keyword id="KW-0891">Chondrogenesis</keyword>
<keyword id="KW-0165">Cleavage on pair of basic residues</keyword>
<keyword id="KW-0202">Cytokine</keyword>
<keyword id="KW-0217">Developmental protein</keyword>
<keyword id="KW-0221">Differentiation</keyword>
<keyword id="KW-1015">Disulfide bond</keyword>
<keyword id="KW-0325">Glycoprotein</keyword>
<keyword id="KW-0339">Growth factor</keyword>
<keyword id="KW-0892">Osteogenesis</keyword>
<keyword id="KW-1185">Reference proteome</keyword>
<keyword id="KW-0964">Secreted</keyword>
<keyword id="KW-0732">Signal</keyword>
<evidence type="ECO:0000250" key="1"/>
<evidence type="ECO:0000250" key="2">
    <source>
        <dbReference type="UniProtKB" id="P12643"/>
    </source>
</evidence>
<evidence type="ECO:0000255" key="3"/>
<evidence type="ECO:0000305" key="4"/>
<reference key="1">
    <citation type="submission" date="2002-08" db="EMBL/GenBank/DDBJ databases">
        <title>Identification of Tetraodon nigroviridis bone morphogenetic protein 2 (BMP-2) by comparative genomics.</title>
        <authorList>
            <person name="Laize V."/>
            <person name="Pombinho A.R."/>
            <person name="Cancela M.L."/>
        </authorList>
    </citation>
    <scope>NUCLEOTIDE SEQUENCE [GENOMIC DNA]</scope>
</reference>
<reference key="2">
    <citation type="journal article" date="2004" name="Nature">
        <title>Genome duplication in the teleost fish Tetraodon nigroviridis reveals the early vertebrate proto-karyotype.</title>
        <authorList>
            <person name="Jaillon O."/>
            <person name="Aury J.-M."/>
            <person name="Brunet F."/>
            <person name="Petit J.-L."/>
            <person name="Stange-Thomann N."/>
            <person name="Mauceli E."/>
            <person name="Bouneau L."/>
            <person name="Fischer C."/>
            <person name="Ozouf-Costaz C."/>
            <person name="Bernot A."/>
            <person name="Nicaud S."/>
            <person name="Jaffe D."/>
            <person name="Fisher S."/>
            <person name="Lutfalla G."/>
            <person name="Dossat C."/>
            <person name="Segurens B."/>
            <person name="Dasilva C."/>
            <person name="Salanoubat M."/>
            <person name="Levy M."/>
            <person name="Boudet N."/>
            <person name="Castellano S."/>
            <person name="Anthouard V."/>
            <person name="Jubin C."/>
            <person name="Castelli V."/>
            <person name="Katinka M."/>
            <person name="Vacherie B."/>
            <person name="Biemont C."/>
            <person name="Skalli Z."/>
            <person name="Cattolico L."/>
            <person name="Poulain J."/>
            <person name="De Berardinis V."/>
            <person name="Cruaud C."/>
            <person name="Duprat S."/>
            <person name="Brottier P."/>
            <person name="Coutanceau J.-P."/>
            <person name="Gouzy J."/>
            <person name="Parra G."/>
            <person name="Lardier G."/>
            <person name="Chapple C."/>
            <person name="McKernan K.J."/>
            <person name="McEwan P."/>
            <person name="Bosak S."/>
            <person name="Kellis M."/>
            <person name="Volff J.-N."/>
            <person name="Guigo R."/>
            <person name="Zody M.C."/>
            <person name="Mesirov J."/>
            <person name="Lindblad-Toh K."/>
            <person name="Birren B."/>
            <person name="Nusbaum C."/>
            <person name="Kahn D."/>
            <person name="Robinson-Rechavi M."/>
            <person name="Laudet V."/>
            <person name="Schachter V."/>
            <person name="Quetier F."/>
            <person name="Saurin W."/>
            <person name="Scarpelli C."/>
            <person name="Wincker P."/>
            <person name="Lander E.S."/>
            <person name="Weissenbach J."/>
            <person name="Roest Crollius H."/>
        </authorList>
    </citation>
    <scope>NUCLEOTIDE SEQUENCE [LARGE SCALE GENOMIC DNA]</scope>
</reference>
<sequence length="420" mass="47625">MVAVVRSLMVLLLAQVLLEGATGLIPEVGRRRYSESGKQSPQQSEGFLNEFELRLLNMFGLKRRPTPSKQAVVPQYMVDLYRMHSANGDHSAKRPKSMGRHAERAASKANTIRSFHHEESMEALARLKGKTTQQFYFNLTSIPKEELITSAELRIYRDQVMGAASTNNSSTNSSTSDKAHAGGFHRINIYEIFGVPQGREPLARLLDTRLVQDSLTRWESFDVSSAVFQWTSGKGHNHGFMIEVLHPEEGEVEQERADKHSRHVRVSRSLHQDRDSWPQARPLLVTYGHDGRGDSVLHTREKRQAALRKQRRKHQHKASCKRHALYVDFSDVGWNEWIVAPPGYHAFYCQGECPFPLADHLNSTNHAIVQTLVNSVNSNIPRACCVPTDLSPISLLYLDEYEKVILKNYQDMVVEGCGCR</sequence>
<proteinExistence type="inferred from homology"/>
<feature type="signal peptide" evidence="3">
    <location>
        <begin position="1"/>
        <end position="23"/>
    </location>
</feature>
<feature type="propeptide" id="PRO_0000042925" evidence="1">
    <location>
        <begin position="24"/>
        <end position="303"/>
    </location>
</feature>
<feature type="chain" id="PRO_0000042926" description="Bone morphogenetic protein 2">
    <location>
        <begin position="304"/>
        <end position="420"/>
    </location>
</feature>
<feature type="glycosylation site" description="N-linked (GlcNAc...) asparagine" evidence="3">
    <location>
        <position position="138"/>
    </location>
</feature>
<feature type="glycosylation site" description="N-linked (GlcNAc...) asparagine" evidence="3">
    <location>
        <position position="167"/>
    </location>
</feature>
<feature type="glycosylation site" description="N-linked (GlcNAc...) asparagine" evidence="3">
    <location>
        <position position="168"/>
    </location>
</feature>
<feature type="glycosylation site" description="N-linked (GlcNAc...) asparagine" evidence="3">
    <location>
        <position position="172"/>
    </location>
</feature>
<feature type="glycosylation site" description="N-linked (GlcNAc...) asparagine" evidence="3">
    <location>
        <position position="362"/>
    </location>
</feature>
<feature type="disulfide bond" evidence="1">
    <location>
        <begin position="320"/>
        <end position="385"/>
    </location>
</feature>
<feature type="disulfide bond" evidence="1">
    <location>
        <begin position="349"/>
        <end position="417"/>
    </location>
</feature>
<feature type="disulfide bond" evidence="1">
    <location>
        <begin position="353"/>
        <end position="419"/>
    </location>
</feature>
<feature type="disulfide bond" description="Interchain" evidence="1">
    <location>
        <position position="384"/>
    </location>
</feature>
<feature type="sequence conflict" description="In Ref. 1; AAO33820." evidence="4" ref="1">
    <original>Q</original>
    <variation>H</variation>
    <location>
        <position position="254"/>
    </location>
</feature>
<feature type="sequence conflict" description="In Ref. 1; AAO33820." evidence="4" ref="1">
    <original>K</original>
    <variation>N</variation>
    <location>
        <position position="259"/>
    </location>
</feature>
<feature type="sequence conflict" description="In Ref. 1; AAO33820." evidence="4" ref="1">
    <original>D</original>
    <variation>N</variation>
    <location>
        <position position="290"/>
    </location>
</feature>
<feature type="sequence conflict" description="In Ref. 1; AAO33820." evidence="4" ref="1">
    <original>E</original>
    <variation>D</variation>
    <location>
        <position position="301"/>
    </location>
</feature>
<feature type="sequence conflict" description="In Ref. 1; AAO33820." evidence="4" ref="1">
    <original>S</original>
    <variation>F</variation>
    <location>
        <position position="363"/>
    </location>
</feature>
<feature type="sequence conflict" description="In Ref. 1; AAO33820." evidence="4" ref="1">
    <original>S</original>
    <variation>L</variation>
    <location>
        <position position="378"/>
    </location>
</feature>
<feature type="sequence conflict" description="In Ref. 1; AAO33820." evidence="4" ref="1">
    <original>C</original>
    <variation>W</variation>
    <location>
        <position position="385"/>
    </location>
</feature>
<feature type="sequence conflict" description="In Ref. 1; AAO33820." evidence="4" ref="1">
    <original>Y</original>
    <variation>F</variation>
    <location>
        <position position="409"/>
    </location>
</feature>
<name>BMP2_TETNG</name>